<name>PRP45_YARLI</name>
<keyword id="KW-0507">mRNA processing</keyword>
<keyword id="KW-0508">mRNA splicing</keyword>
<keyword id="KW-0539">Nucleus</keyword>
<keyword id="KW-1185">Reference proteome</keyword>
<keyword id="KW-0747">Spliceosome</keyword>
<gene>
    <name type="primary">PRP45</name>
    <name type="ordered locus">YALI0C11715g</name>
</gene>
<dbReference type="EMBL" id="CR382129">
    <property type="protein sequence ID" value="CAG82045.1"/>
    <property type="molecule type" value="Genomic_DNA"/>
</dbReference>
<dbReference type="RefSeq" id="XP_501735.1">
    <property type="nucleotide sequence ID" value="XM_501735.1"/>
</dbReference>
<dbReference type="SMR" id="Q6CC77"/>
<dbReference type="FunCoup" id="Q6CC77">
    <property type="interactions" value="1006"/>
</dbReference>
<dbReference type="STRING" id="284591.Q6CC77"/>
<dbReference type="EnsemblFungi" id="CAG82045">
    <property type="protein sequence ID" value="CAG82045"/>
    <property type="gene ID" value="YALI0_C11715g"/>
</dbReference>
<dbReference type="KEGG" id="yli:2909266"/>
<dbReference type="VEuPathDB" id="FungiDB:YALI0_C11715g"/>
<dbReference type="HOGENOM" id="CLU_006601_2_0_1"/>
<dbReference type="InParanoid" id="Q6CC77"/>
<dbReference type="OMA" id="YGQRRGW"/>
<dbReference type="OrthoDB" id="122420at4891"/>
<dbReference type="Proteomes" id="UP000001300">
    <property type="component" value="Chromosome C"/>
</dbReference>
<dbReference type="GO" id="GO:0071014">
    <property type="term" value="C:post-mRNA release spliceosomal complex"/>
    <property type="evidence" value="ECO:0007669"/>
    <property type="project" value="EnsemblFungi"/>
</dbReference>
<dbReference type="GO" id="GO:0000974">
    <property type="term" value="C:Prp19 complex"/>
    <property type="evidence" value="ECO:0007669"/>
    <property type="project" value="EnsemblFungi"/>
</dbReference>
<dbReference type="GO" id="GO:0060090">
    <property type="term" value="F:molecular adaptor activity"/>
    <property type="evidence" value="ECO:0007669"/>
    <property type="project" value="EnsemblFungi"/>
</dbReference>
<dbReference type="GO" id="GO:0003723">
    <property type="term" value="F:RNA binding"/>
    <property type="evidence" value="ECO:0007669"/>
    <property type="project" value="EnsemblFungi"/>
</dbReference>
<dbReference type="GO" id="GO:0000398">
    <property type="term" value="P:mRNA splicing, via spliceosome"/>
    <property type="evidence" value="ECO:0007669"/>
    <property type="project" value="InterPro"/>
</dbReference>
<dbReference type="InterPro" id="IPR017862">
    <property type="entry name" value="SKI-int_prot_SKIP"/>
</dbReference>
<dbReference type="InterPro" id="IPR004015">
    <property type="entry name" value="SKI-int_prot_SKIP_SNW-dom"/>
</dbReference>
<dbReference type="PANTHER" id="PTHR12096">
    <property type="entry name" value="NUCLEAR PROTEIN SKIP-RELATED"/>
    <property type="match status" value="1"/>
</dbReference>
<dbReference type="Pfam" id="PF02731">
    <property type="entry name" value="SKIP_SNW"/>
    <property type="match status" value="1"/>
</dbReference>
<accession>Q6CC77</accession>
<organism>
    <name type="scientific">Yarrowia lipolytica (strain CLIB 122 / E 150)</name>
    <name type="common">Yeast</name>
    <name type="synonym">Candida lipolytica</name>
    <dbReference type="NCBI Taxonomy" id="284591"/>
    <lineage>
        <taxon>Eukaryota</taxon>
        <taxon>Fungi</taxon>
        <taxon>Dikarya</taxon>
        <taxon>Ascomycota</taxon>
        <taxon>Saccharomycotina</taxon>
        <taxon>Dipodascomycetes</taxon>
        <taxon>Dipodascales</taxon>
        <taxon>Dipodascales incertae sedis</taxon>
        <taxon>Yarrowia</taxon>
    </lineage>
</organism>
<proteinExistence type="inferred from homology"/>
<evidence type="ECO:0000250" key="1"/>
<evidence type="ECO:0000256" key="2">
    <source>
        <dbReference type="SAM" id="MobiDB-lite"/>
    </source>
</evidence>
<evidence type="ECO:0000305" key="3"/>
<feature type="chain" id="PRO_0000084824" description="Pre-mRNA-processing protein 45">
    <location>
        <begin position="1"/>
        <end position="568"/>
    </location>
</feature>
<feature type="region of interest" description="Disordered" evidence="2">
    <location>
        <begin position="199"/>
        <end position="232"/>
    </location>
</feature>
<feature type="region of interest" description="Disordered" evidence="2">
    <location>
        <begin position="281"/>
        <end position="449"/>
    </location>
</feature>
<feature type="region of interest" description="Disordered" evidence="2">
    <location>
        <begin position="545"/>
        <end position="568"/>
    </location>
</feature>
<feature type="compositionally biased region" description="Basic and acidic residues" evidence="2">
    <location>
        <begin position="286"/>
        <end position="364"/>
    </location>
</feature>
<feature type="compositionally biased region" description="Low complexity" evidence="2">
    <location>
        <begin position="365"/>
        <end position="379"/>
    </location>
</feature>
<feature type="compositionally biased region" description="Basic and acidic residues" evidence="2">
    <location>
        <begin position="395"/>
        <end position="419"/>
    </location>
</feature>
<feature type="compositionally biased region" description="Basic and acidic residues" evidence="2">
    <location>
        <begin position="426"/>
        <end position="440"/>
    </location>
</feature>
<feature type="compositionally biased region" description="Basic and acidic residues" evidence="2">
    <location>
        <begin position="557"/>
        <end position="568"/>
    </location>
</feature>
<protein>
    <recommendedName>
        <fullName>Pre-mRNA-processing protein 45</fullName>
    </recommendedName>
</protein>
<sequence>MTSITALLPAPRYPTPGPKMSIFTTNAVSMAKNDSVPKYGSRTDWKPTSQADFNDGGAYPEIHIAQYPRNMGKPGSVSSNAITLKMDASGSADYSLIATQGHAADRHVQTSYDSLIPLRERIDAGTVSLEKPGEEAEQSTALATQAAFDKRLAANDKSGTKNKSDPQYIRYTANSMMGTEGGESQKIIKMVDLPQDPLEPPKFKHTKVPGRPASPPAPILRSPPRKLTAQDQKDWAIPSTVSNWKNQKGFTISLDKRMAADGRGLEDVKVNENFAKFSEVLNQNEKTMRDDIGKRREMQQRVAERQAQEQEEKLRELARRARQEREVGDESKGKEKEADGEDDRGRSRERLRSVSRDGDSDRSLSRSLSASDRSYSRSRSPYESRSRGRSYSRSRSPESRFRGRSDSRSRSPGYELERAAKKRKTERLERKREAERDLRLSKMGTQQKIKQLAKENSRDISERVALGAAQPQKLAGEAQFDSRLFSKSGSLQRGFNEDQYYDKSLFSAQEAVQSIYRPSASGDSVAEDTIDRLETEKRFDVLGKAGKGFEGADGEERDGPVRFVRDEE</sequence>
<comment type="function">
    <text evidence="1">Involved in pre-mRNA splicing.</text>
</comment>
<comment type="subunit">
    <text evidence="1">Associated with the spliceosome.</text>
</comment>
<comment type="subcellular location">
    <subcellularLocation>
        <location evidence="1">Nucleus</location>
    </subcellularLocation>
</comment>
<comment type="similarity">
    <text evidence="3">Belongs to the SNW family.</text>
</comment>
<reference key="1">
    <citation type="journal article" date="2004" name="Nature">
        <title>Genome evolution in yeasts.</title>
        <authorList>
            <person name="Dujon B."/>
            <person name="Sherman D."/>
            <person name="Fischer G."/>
            <person name="Durrens P."/>
            <person name="Casaregola S."/>
            <person name="Lafontaine I."/>
            <person name="de Montigny J."/>
            <person name="Marck C."/>
            <person name="Neuveglise C."/>
            <person name="Talla E."/>
            <person name="Goffard N."/>
            <person name="Frangeul L."/>
            <person name="Aigle M."/>
            <person name="Anthouard V."/>
            <person name="Babour A."/>
            <person name="Barbe V."/>
            <person name="Barnay S."/>
            <person name="Blanchin S."/>
            <person name="Beckerich J.-M."/>
            <person name="Beyne E."/>
            <person name="Bleykasten C."/>
            <person name="Boisrame A."/>
            <person name="Boyer J."/>
            <person name="Cattolico L."/>
            <person name="Confanioleri F."/>
            <person name="de Daruvar A."/>
            <person name="Despons L."/>
            <person name="Fabre E."/>
            <person name="Fairhead C."/>
            <person name="Ferry-Dumazet H."/>
            <person name="Groppi A."/>
            <person name="Hantraye F."/>
            <person name="Hennequin C."/>
            <person name="Jauniaux N."/>
            <person name="Joyet P."/>
            <person name="Kachouri R."/>
            <person name="Kerrest A."/>
            <person name="Koszul R."/>
            <person name="Lemaire M."/>
            <person name="Lesur I."/>
            <person name="Ma L."/>
            <person name="Muller H."/>
            <person name="Nicaud J.-M."/>
            <person name="Nikolski M."/>
            <person name="Oztas S."/>
            <person name="Ozier-Kalogeropoulos O."/>
            <person name="Pellenz S."/>
            <person name="Potier S."/>
            <person name="Richard G.-F."/>
            <person name="Straub M.-L."/>
            <person name="Suleau A."/>
            <person name="Swennen D."/>
            <person name="Tekaia F."/>
            <person name="Wesolowski-Louvel M."/>
            <person name="Westhof E."/>
            <person name="Wirth B."/>
            <person name="Zeniou-Meyer M."/>
            <person name="Zivanovic Y."/>
            <person name="Bolotin-Fukuhara M."/>
            <person name="Thierry A."/>
            <person name="Bouchier C."/>
            <person name="Caudron B."/>
            <person name="Scarpelli C."/>
            <person name="Gaillardin C."/>
            <person name="Weissenbach J."/>
            <person name="Wincker P."/>
            <person name="Souciet J.-L."/>
        </authorList>
    </citation>
    <scope>NUCLEOTIDE SEQUENCE [LARGE SCALE GENOMIC DNA]</scope>
    <source>
        <strain>CLIB 122 / E 150</strain>
    </source>
</reference>